<comment type="function">
    <text evidence="2">Cysteine protease that plays an important role in the inhibition of host innate immune response. Cleaves host elastins found in connective tissues, pulmonary surfactant protein A in the lungs, and the chemokine receptor CXCR2 on leukocytes. Proteolytic cleavage of surfactant protein A impairs bacterial phagocytosis by neutrophils while CXCR2 degradation blocks neutrophil activation and chemotaxis. Additionally, promotes vascular leakage by activating the plasma kallikerin/kinin system, resulting in hypotension.</text>
</comment>
<comment type="catalytic activity">
    <reaction>
        <text>Broad endopeptidase action on proteins including elastin, but rather limited hydrolysis of small-molecule substrates. Assays are conveniently made with hemoglobin, casein or Z-Phe-Arg-NHMec as substrate.</text>
        <dbReference type="EC" id="3.4.22.48"/>
    </reaction>
</comment>
<comment type="activity regulation">
    <text evidence="1">Prematurely activated/folded staphopain A is inhibited by staphostatin A (ScpB), which is probably required to protect staphylococcal cytoplasmic proteins from degradation by ScpA.</text>
</comment>
<comment type="subunit">
    <text evidence="1">In the cytoplasm, prematurely activated/folded ScpA forms a stable non-covalent complex with ScpB.</text>
</comment>
<comment type="subcellular location">
    <subcellularLocation>
        <location evidence="2">Secreted</location>
    </subcellularLocation>
</comment>
<comment type="PTM">
    <text evidence="1">Cleavage leads to the activation of ScpA probably by an auto-catalytic manner.</text>
</comment>
<comment type="miscellaneous">
    <text evidence="1">The catalytic maturation of ScpA appears to reside outside the cascade of activation started by the metalloprotease aureolysin (aur).</text>
</comment>
<comment type="similarity">
    <text evidence="5">Belongs to the peptidase C47 family.</text>
</comment>
<protein>
    <recommendedName>
        <fullName>Staphopain A</fullName>
        <ecNumber>3.4.22.48</ecNumber>
    </recommendedName>
    <alternativeName>
        <fullName>Staphylococcal cysteine proteinase A</fullName>
    </alternativeName>
    <alternativeName>
        <fullName>Staphylopain A</fullName>
    </alternativeName>
</protein>
<dbReference type="EC" id="3.4.22.48"/>
<dbReference type="EMBL" id="BA000017">
    <property type="protein sequence ID" value="BAB58071.1"/>
    <property type="molecule type" value="Genomic_DNA"/>
</dbReference>
<dbReference type="RefSeq" id="WP_000827746.1">
    <property type="nucleotide sequence ID" value="NC_002758.2"/>
</dbReference>
<dbReference type="SMR" id="P65825"/>
<dbReference type="MEROPS" id="C47.001"/>
<dbReference type="KEGG" id="sav:SAV1909"/>
<dbReference type="HOGENOM" id="CLU_069043_0_0_9"/>
<dbReference type="PRO" id="PR:P65825"/>
<dbReference type="Proteomes" id="UP000002481">
    <property type="component" value="Chromosome"/>
</dbReference>
<dbReference type="GO" id="GO:0005576">
    <property type="term" value="C:extracellular region"/>
    <property type="evidence" value="ECO:0007669"/>
    <property type="project" value="UniProtKB-SubCell"/>
</dbReference>
<dbReference type="GO" id="GO:0008234">
    <property type="term" value="F:cysteine-type peptidase activity"/>
    <property type="evidence" value="ECO:0007669"/>
    <property type="project" value="UniProtKB-KW"/>
</dbReference>
<dbReference type="GO" id="GO:0006508">
    <property type="term" value="P:proteolysis"/>
    <property type="evidence" value="ECO:0007669"/>
    <property type="project" value="UniProtKB-KW"/>
</dbReference>
<dbReference type="Gene3D" id="3.90.70.10">
    <property type="entry name" value="Cysteine proteinases"/>
    <property type="match status" value="1"/>
</dbReference>
<dbReference type="Gene3D" id="3.10.500.10">
    <property type="entry name" value="Staphopain proregion domain"/>
    <property type="match status" value="1"/>
</dbReference>
<dbReference type="InterPro" id="IPR046350">
    <property type="entry name" value="Cystatin_sf"/>
</dbReference>
<dbReference type="InterPro" id="IPR038765">
    <property type="entry name" value="Papain-like_cys_pep_sf"/>
</dbReference>
<dbReference type="InterPro" id="IPR025660">
    <property type="entry name" value="Pept_his_AS"/>
</dbReference>
<dbReference type="InterPro" id="IPR008750">
    <property type="entry name" value="Peptidase_C47"/>
</dbReference>
<dbReference type="InterPro" id="IPR028076">
    <property type="entry name" value="Staphopain_pro"/>
</dbReference>
<dbReference type="InterPro" id="IPR037155">
    <property type="entry name" value="Staphopain_pro_sf"/>
</dbReference>
<dbReference type="Pfam" id="PF05543">
    <property type="entry name" value="Peptidase_C47"/>
    <property type="match status" value="1"/>
</dbReference>
<dbReference type="Pfam" id="PF14731">
    <property type="entry name" value="Staphopain_pro"/>
    <property type="match status" value="1"/>
</dbReference>
<dbReference type="SUPFAM" id="SSF54403">
    <property type="entry name" value="Cystatin/monellin"/>
    <property type="match status" value="1"/>
</dbReference>
<dbReference type="SUPFAM" id="SSF54001">
    <property type="entry name" value="Cysteine proteinases"/>
    <property type="match status" value="1"/>
</dbReference>
<dbReference type="PROSITE" id="PS00639">
    <property type="entry name" value="THIOL_PROTEASE_HIS"/>
    <property type="match status" value="1"/>
</dbReference>
<evidence type="ECO:0000250" key="1"/>
<evidence type="ECO:0000250" key="2">
    <source>
        <dbReference type="UniProtKB" id="P81297"/>
    </source>
</evidence>
<evidence type="ECO:0000255" key="3"/>
<evidence type="ECO:0000255" key="4">
    <source>
        <dbReference type="PROSITE-ProRule" id="PRU10089"/>
    </source>
</evidence>
<evidence type="ECO:0000305" key="5"/>
<keyword id="KW-0378">Hydrolase</keyword>
<keyword id="KW-0645">Protease</keyword>
<keyword id="KW-0964">Secreted</keyword>
<keyword id="KW-0732">Signal</keyword>
<keyword id="KW-0788">Thiol protease</keyword>
<keyword id="KW-0843">Virulence</keyword>
<keyword id="KW-0865">Zymogen</keyword>
<name>SSPP_STAAM</name>
<proteinExistence type="inferred from homology"/>
<reference key="1">
    <citation type="journal article" date="2001" name="Lancet">
        <title>Whole genome sequencing of meticillin-resistant Staphylococcus aureus.</title>
        <authorList>
            <person name="Kuroda M."/>
            <person name="Ohta T."/>
            <person name="Uchiyama I."/>
            <person name="Baba T."/>
            <person name="Yuzawa H."/>
            <person name="Kobayashi I."/>
            <person name="Cui L."/>
            <person name="Oguchi A."/>
            <person name="Aoki K."/>
            <person name="Nagai Y."/>
            <person name="Lian J.-Q."/>
            <person name="Ito T."/>
            <person name="Kanamori M."/>
            <person name="Matsumaru H."/>
            <person name="Maruyama A."/>
            <person name="Murakami H."/>
            <person name="Hosoyama A."/>
            <person name="Mizutani-Ui Y."/>
            <person name="Takahashi N.K."/>
            <person name="Sawano T."/>
            <person name="Inoue R."/>
            <person name="Kaito C."/>
            <person name="Sekimizu K."/>
            <person name="Hirakawa H."/>
            <person name="Kuhara S."/>
            <person name="Goto S."/>
            <person name="Yabuzaki J."/>
            <person name="Kanehisa M."/>
            <person name="Yamashita A."/>
            <person name="Oshima K."/>
            <person name="Furuya K."/>
            <person name="Yoshino C."/>
            <person name="Shiba T."/>
            <person name="Hattori M."/>
            <person name="Ogasawara N."/>
            <person name="Hayashi H."/>
            <person name="Hiramatsu K."/>
        </authorList>
    </citation>
    <scope>NUCLEOTIDE SEQUENCE [LARGE SCALE GENOMIC DNA]</scope>
    <source>
        <strain>Mu50 / ATCC 700699</strain>
    </source>
</reference>
<feature type="signal peptide" evidence="3">
    <location>
        <begin position="1"/>
        <end position="25"/>
    </location>
</feature>
<feature type="propeptide" id="PRO_0000026549" evidence="1">
    <location>
        <begin position="26"/>
        <end position="214"/>
    </location>
</feature>
<feature type="chain" id="PRO_0000026550" description="Staphopain A">
    <location>
        <begin position="215"/>
        <end position="388"/>
    </location>
</feature>
<feature type="active site" evidence="4">
    <location>
        <position position="238"/>
    </location>
</feature>
<feature type="active site" evidence="4">
    <location>
        <position position="334"/>
    </location>
</feature>
<feature type="active site" evidence="4">
    <location>
        <position position="355"/>
    </location>
</feature>
<feature type="site" description="Cleavage" evidence="1">
    <location>
        <begin position="214"/>
        <end position="215"/>
    </location>
</feature>
<sequence>MKRNFPKLIALSLIFSLSVTPIANAESNSNIKAKDKKHVQVNVEDKSVPTDVRNLAQKDYLSYVTSLDKIYNKEKASYTLGEPFKIYKFNKKSDGNYYFPVLNTEGNIDYIVTISPKITKYSSSSSKYTINVSPFLSKVLNQYKDQQITILTNSKGYYVVTQNHKAKLVLKTPRLEDKKLKKTESIPTGNNVTQLKQKASVTMPTSQFKSNNYTYNEQYINKLENFKIRETQGNNGWCAGYTMSALLNATYNTNKYHAEAVMRFLHPNLQGQRFQFTGLTPREMIYFGQTQGRSPQLLNRMTTYNEVDNLTKNNKGIAVLGSRVESRNGMHAGHAMAVVGNAKLDNGQEVIIIWNPWDNGFMTQDAKNNVIPVSNGDHYRWYSSIYGY</sequence>
<gene>
    <name type="primary">sspP</name>
    <name type="synonym">scpA</name>
    <name type="ordered locus">SAV1909</name>
</gene>
<organism>
    <name type="scientific">Staphylococcus aureus (strain Mu50 / ATCC 700699)</name>
    <dbReference type="NCBI Taxonomy" id="158878"/>
    <lineage>
        <taxon>Bacteria</taxon>
        <taxon>Bacillati</taxon>
        <taxon>Bacillota</taxon>
        <taxon>Bacilli</taxon>
        <taxon>Bacillales</taxon>
        <taxon>Staphylococcaceae</taxon>
        <taxon>Staphylococcus</taxon>
    </lineage>
</organism>
<accession>P65825</accession>
<accession>Q99SX8</accession>